<evidence type="ECO:0000250" key="1">
    <source>
        <dbReference type="UniProtKB" id="A2A825"/>
    </source>
</evidence>
<evidence type="ECO:0000250" key="2">
    <source>
        <dbReference type="UniProtKB" id="Q6GNL4"/>
    </source>
</evidence>
<evidence type="ECO:0000269" key="3">
    <source>
    </source>
</evidence>
<evidence type="ECO:0000269" key="4">
    <source>
    </source>
</evidence>
<evidence type="ECO:0000269" key="5">
    <source>
    </source>
</evidence>
<evidence type="ECO:0000269" key="6">
    <source>
    </source>
</evidence>
<evidence type="ECO:0000305" key="7"/>
<evidence type="ECO:0000312" key="8">
    <source>
        <dbReference type="HGNC" id="HGNC:28127"/>
    </source>
</evidence>
<feature type="chain" id="PRO_0000284538" description="Ciliogenesis and planar polarity effector 2">
    <location>
        <begin position="1"/>
        <end position="258"/>
    </location>
</feature>
<feature type="region of interest" description="Small GTPase-like">
    <location>
        <begin position="50"/>
        <end position="258"/>
    </location>
</feature>
<feature type="binding site" evidence="1">
    <location>
        <position position="64"/>
    </location>
    <ligand>
        <name>GTP</name>
        <dbReference type="ChEBI" id="CHEBI:37565"/>
    </ligand>
</feature>
<feature type="binding site" evidence="1">
    <location>
        <position position="65"/>
    </location>
    <ligand>
        <name>GTP</name>
        <dbReference type="ChEBI" id="CHEBI:37565"/>
    </ligand>
</feature>
<feature type="binding site" evidence="1">
    <location>
        <position position="67"/>
    </location>
    <ligand>
        <name>GTP</name>
        <dbReference type="ChEBI" id="CHEBI:37565"/>
    </ligand>
</feature>
<feature type="binding site" evidence="1">
    <location>
        <position position="68"/>
    </location>
    <ligand>
        <name>GTP</name>
        <dbReference type="ChEBI" id="CHEBI:37565"/>
    </ligand>
</feature>
<feature type="binding site" evidence="1">
    <location>
        <position position="69"/>
    </location>
    <ligand>
        <name>GTP</name>
        <dbReference type="ChEBI" id="CHEBI:37565"/>
    </ligand>
</feature>
<feature type="binding site" evidence="1">
    <location>
        <position position="70"/>
    </location>
    <ligand>
        <name>GTP</name>
        <dbReference type="ChEBI" id="CHEBI:37565"/>
    </ligand>
</feature>
<feature type="binding site" evidence="1">
    <location>
        <position position="82"/>
    </location>
    <ligand>
        <name>GTP</name>
        <dbReference type="ChEBI" id="CHEBI:37565"/>
    </ligand>
</feature>
<feature type="binding site" evidence="1">
    <location>
        <position position="84"/>
    </location>
    <ligand>
        <name>GTP</name>
        <dbReference type="ChEBI" id="CHEBI:37565"/>
    </ligand>
</feature>
<feature type="binding site" evidence="1">
    <location>
        <position position="87"/>
    </location>
    <ligand>
        <name>GTP</name>
        <dbReference type="ChEBI" id="CHEBI:37565"/>
    </ligand>
</feature>
<feature type="binding site" evidence="1">
    <location>
        <position position="176"/>
    </location>
    <ligand>
        <name>GTP</name>
        <dbReference type="ChEBI" id="CHEBI:37565"/>
    </ligand>
</feature>
<feature type="binding site" evidence="1">
    <location>
        <position position="178"/>
    </location>
    <ligand>
        <name>GTP</name>
        <dbReference type="ChEBI" id="CHEBI:37565"/>
    </ligand>
</feature>
<feature type="binding site" evidence="1">
    <location>
        <position position="206"/>
    </location>
    <ligand>
        <name>GTP</name>
        <dbReference type="ChEBI" id="CHEBI:37565"/>
    </ligand>
</feature>
<feature type="sequence variant" id="VAR_031772" description="In dbSNP:rs17849687." evidence="3">
    <original>E</original>
    <variation>G</variation>
    <location>
        <position position="86"/>
    </location>
</feature>
<feature type="sequence variant" id="VAR_079173" evidence="4">
    <original>I</original>
    <variation>L</variation>
    <location>
        <position position="161"/>
    </location>
</feature>
<dbReference type="EMBL" id="AL109627">
    <property type="status" value="NOT_ANNOTATED_CDS"/>
    <property type="molecule type" value="Genomic_DNA"/>
</dbReference>
<dbReference type="EMBL" id="BC002946">
    <property type="protein sequence ID" value="AAH02946.1"/>
    <property type="molecule type" value="mRNA"/>
</dbReference>
<dbReference type="EMBL" id="BC008702">
    <property type="protein sequence ID" value="AAH08702.1"/>
    <property type="molecule type" value="mRNA"/>
</dbReference>
<dbReference type="CCDS" id="CCDS171.1"/>
<dbReference type="RefSeq" id="NP_112169.2">
    <property type="nucleotide sequence ID" value="NM_030907.4"/>
</dbReference>
<dbReference type="SMR" id="Q9BU20"/>
<dbReference type="BioGRID" id="122652">
    <property type="interactions" value="12"/>
</dbReference>
<dbReference type="FunCoup" id="Q9BU20">
    <property type="interactions" value="249"/>
</dbReference>
<dbReference type="IntAct" id="Q9BU20">
    <property type="interactions" value="11"/>
</dbReference>
<dbReference type="STRING" id="9606.ENSP00000364749"/>
<dbReference type="iPTMnet" id="Q9BU20"/>
<dbReference type="PhosphoSitePlus" id="Q9BU20"/>
<dbReference type="BioMuta" id="RSG1"/>
<dbReference type="DMDM" id="145558869"/>
<dbReference type="MassIVE" id="Q9BU20"/>
<dbReference type="PaxDb" id="9606-ENSP00000364749"/>
<dbReference type="PeptideAtlas" id="Q9BU20"/>
<dbReference type="Antibodypedia" id="29156">
    <property type="antibodies" value="50 antibodies from 14 providers"/>
</dbReference>
<dbReference type="DNASU" id="79363"/>
<dbReference type="Ensembl" id="ENST00000375599.8">
    <property type="protein sequence ID" value="ENSP00000364749.2"/>
    <property type="gene ID" value="ENSG00000132881.12"/>
</dbReference>
<dbReference type="Ensembl" id="ENST00000707390.1">
    <property type="protein sequence ID" value="ENSP00000516858.1"/>
    <property type="gene ID" value="ENSG00000291382.1"/>
</dbReference>
<dbReference type="GeneID" id="79363"/>
<dbReference type="KEGG" id="hsa:79363"/>
<dbReference type="MANE-Select" id="ENST00000375599.8">
    <property type="protein sequence ID" value="ENSP00000364749.2"/>
    <property type="RefSeq nucleotide sequence ID" value="NM_030907.4"/>
    <property type="RefSeq protein sequence ID" value="NP_112169.2"/>
</dbReference>
<dbReference type="UCSC" id="uc001ayd.4">
    <property type="organism name" value="human"/>
</dbReference>
<dbReference type="AGR" id="HGNC:28127"/>
<dbReference type="CTD" id="79363"/>
<dbReference type="DisGeNET" id="79363"/>
<dbReference type="GeneCards" id="CPLANE2"/>
<dbReference type="HGNC" id="HGNC:28127">
    <property type="gene designation" value="CPLANE2"/>
</dbReference>
<dbReference type="HPA" id="ENSG00000132881">
    <property type="expression patterns" value="Low tissue specificity"/>
</dbReference>
<dbReference type="MIM" id="620487">
    <property type="type" value="gene"/>
</dbReference>
<dbReference type="neXtProt" id="NX_Q9BU20"/>
<dbReference type="PharmGKB" id="PA142672473"/>
<dbReference type="VEuPathDB" id="HostDB:ENSG00000132881"/>
<dbReference type="eggNOG" id="KOG0395">
    <property type="taxonomic scope" value="Eukaryota"/>
</dbReference>
<dbReference type="GeneTree" id="ENSGT00390000006521"/>
<dbReference type="HOGENOM" id="CLU_094613_0_0_1"/>
<dbReference type="InParanoid" id="Q9BU20"/>
<dbReference type="OMA" id="PSMHHET"/>
<dbReference type="OrthoDB" id="10266641at2759"/>
<dbReference type="PAN-GO" id="Q9BU20">
    <property type="GO annotations" value="0 GO annotations based on evolutionary models"/>
</dbReference>
<dbReference type="PhylomeDB" id="Q9BU20"/>
<dbReference type="TreeFam" id="TF329319"/>
<dbReference type="PathwayCommons" id="Q9BU20"/>
<dbReference type="SignaLink" id="Q9BU20"/>
<dbReference type="BioGRID-ORCS" id="79363">
    <property type="hits" value="16 hits in 1150 CRISPR screens"/>
</dbReference>
<dbReference type="GenomeRNAi" id="79363"/>
<dbReference type="Pharos" id="Q9BU20">
    <property type="development level" value="Tdark"/>
</dbReference>
<dbReference type="PRO" id="PR:Q9BU20"/>
<dbReference type="Proteomes" id="UP000005640">
    <property type="component" value="Chromosome 1"/>
</dbReference>
<dbReference type="RNAct" id="Q9BU20">
    <property type="molecule type" value="protein"/>
</dbReference>
<dbReference type="Bgee" id="ENSG00000132881">
    <property type="expression patterns" value="Expressed in primordial germ cell in gonad and 96 other cell types or tissues"/>
</dbReference>
<dbReference type="ExpressionAtlas" id="Q9BU20">
    <property type="expression patterns" value="baseline and differential"/>
</dbReference>
<dbReference type="GO" id="GO:0005814">
    <property type="term" value="C:centriole"/>
    <property type="evidence" value="ECO:0000314"/>
    <property type="project" value="UniProtKB"/>
</dbReference>
<dbReference type="GO" id="GO:0036064">
    <property type="term" value="C:ciliary basal body"/>
    <property type="evidence" value="ECO:0000314"/>
    <property type="project" value="UniProtKB"/>
</dbReference>
<dbReference type="GO" id="GO:0097546">
    <property type="term" value="C:ciliary base"/>
    <property type="evidence" value="ECO:0007669"/>
    <property type="project" value="Ensembl"/>
</dbReference>
<dbReference type="GO" id="GO:0035869">
    <property type="term" value="C:ciliary transition zone"/>
    <property type="evidence" value="ECO:0000314"/>
    <property type="project" value="UniProtKB"/>
</dbReference>
<dbReference type="GO" id="GO:0005737">
    <property type="term" value="C:cytoplasm"/>
    <property type="evidence" value="ECO:0007669"/>
    <property type="project" value="UniProtKB-KW"/>
</dbReference>
<dbReference type="GO" id="GO:0005525">
    <property type="term" value="F:GTP binding"/>
    <property type="evidence" value="ECO:0000250"/>
    <property type="project" value="UniProtKB"/>
</dbReference>
<dbReference type="GO" id="GO:0003924">
    <property type="term" value="F:GTPase activity"/>
    <property type="evidence" value="ECO:0007669"/>
    <property type="project" value="Ensembl"/>
</dbReference>
<dbReference type="GO" id="GO:0035082">
    <property type="term" value="P:axoneme assembly"/>
    <property type="evidence" value="ECO:0007669"/>
    <property type="project" value="Ensembl"/>
</dbReference>
<dbReference type="GO" id="GO:0060271">
    <property type="term" value="P:cilium assembly"/>
    <property type="evidence" value="ECO:0000250"/>
    <property type="project" value="UniProtKB"/>
</dbReference>
<dbReference type="GO" id="GO:1904888">
    <property type="term" value="P:cranial skeletal system development"/>
    <property type="evidence" value="ECO:0007669"/>
    <property type="project" value="Ensembl"/>
</dbReference>
<dbReference type="GO" id="GO:0003274">
    <property type="term" value="P:endocardial cushion fusion"/>
    <property type="evidence" value="ECO:0007669"/>
    <property type="project" value="Ensembl"/>
</dbReference>
<dbReference type="GO" id="GO:0006887">
    <property type="term" value="P:exocytosis"/>
    <property type="evidence" value="ECO:0007669"/>
    <property type="project" value="UniProtKB-KW"/>
</dbReference>
<dbReference type="GO" id="GO:0060173">
    <property type="term" value="P:limb development"/>
    <property type="evidence" value="ECO:0007669"/>
    <property type="project" value="Ensembl"/>
</dbReference>
<dbReference type="GO" id="GO:0008104">
    <property type="term" value="P:protein localization"/>
    <property type="evidence" value="ECO:0000250"/>
    <property type="project" value="UniProtKB"/>
</dbReference>
<dbReference type="GO" id="GO:0016485">
    <property type="term" value="P:protein processing"/>
    <property type="evidence" value="ECO:0007669"/>
    <property type="project" value="Ensembl"/>
</dbReference>
<dbReference type="GO" id="GO:0015031">
    <property type="term" value="P:protein transport"/>
    <property type="evidence" value="ECO:0007669"/>
    <property type="project" value="UniProtKB-KW"/>
</dbReference>
<dbReference type="GO" id="GO:0017157">
    <property type="term" value="P:regulation of exocytosis"/>
    <property type="evidence" value="ECO:0000250"/>
    <property type="project" value="UniProtKB"/>
</dbReference>
<dbReference type="GO" id="GO:0008589">
    <property type="term" value="P:regulation of smoothened signaling pathway"/>
    <property type="evidence" value="ECO:0007669"/>
    <property type="project" value="Ensembl"/>
</dbReference>
<dbReference type="GO" id="GO:0031338">
    <property type="term" value="P:regulation of vesicle fusion"/>
    <property type="evidence" value="ECO:0000250"/>
    <property type="project" value="UniProtKB"/>
</dbReference>
<dbReference type="GO" id="GO:0007224">
    <property type="term" value="P:smoothened signaling pathway"/>
    <property type="evidence" value="ECO:0007669"/>
    <property type="project" value="Ensembl"/>
</dbReference>
<dbReference type="CDD" id="cd00882">
    <property type="entry name" value="Ras_like_GTPase"/>
    <property type="match status" value="1"/>
</dbReference>
<dbReference type="FunFam" id="3.40.50.300:FF:001043">
    <property type="entry name" value="ciliogenesis and planar polarity effector 2"/>
    <property type="match status" value="1"/>
</dbReference>
<dbReference type="Gene3D" id="3.40.50.300">
    <property type="entry name" value="P-loop containing nucleotide triphosphate hydrolases"/>
    <property type="match status" value="1"/>
</dbReference>
<dbReference type="InterPro" id="IPR027417">
    <property type="entry name" value="P-loop_NTPase"/>
</dbReference>
<dbReference type="InterPro" id="IPR039677">
    <property type="entry name" value="RSG1"/>
</dbReference>
<dbReference type="InterPro" id="IPR001806">
    <property type="entry name" value="Small_GTPase"/>
</dbReference>
<dbReference type="PANTHER" id="PTHR14983">
    <property type="entry name" value="CILIOGENESIS AND PLANAR POLARITY EFFECTOR 2"/>
    <property type="match status" value="1"/>
</dbReference>
<dbReference type="PANTHER" id="PTHR14983:SF1">
    <property type="entry name" value="CILIOGENESIS AND PLANAR POLARITY EFFECTOR 2"/>
    <property type="match status" value="1"/>
</dbReference>
<dbReference type="Pfam" id="PF00071">
    <property type="entry name" value="Ras"/>
    <property type="match status" value="1"/>
</dbReference>
<dbReference type="PRINTS" id="PR00449">
    <property type="entry name" value="RASTRNSFRMNG"/>
</dbReference>
<dbReference type="SUPFAM" id="SSF52540">
    <property type="entry name" value="P-loop containing nucleoside triphosphate hydrolases"/>
    <property type="match status" value="1"/>
</dbReference>
<comment type="function">
    <text evidence="1">Required for efficient primary cilia initiation, regulating a late step in cilia initiation. Plays a role in the final maturation of the mother centriole and ciliary vesicle that allows extension of the ciliary axoneme.</text>
</comment>
<comment type="subunit">
    <text evidence="6">Interacts with FUZ. Associates with the CPLANE (ciliogenesis and planar polarity effectors) complex via its interaction with FUZ (PubMed:35427153).</text>
</comment>
<comment type="interaction">
    <interactant intactId="EBI-750332">
        <id>Q9BU20</id>
    </interactant>
    <interactant intactId="EBI-750341">
        <id>Q9BT04</id>
        <label>FUZ</label>
    </interactant>
    <organismsDiffer>false</organismsDiffer>
    <experiments>11</experiments>
</comment>
<comment type="interaction">
    <interactant intactId="EBI-750332">
        <id>Q9BU20</id>
    </interactant>
    <interactant intactId="EBI-353389">
        <id>P12268</id>
        <label>IMPDH2</label>
    </interactant>
    <organismsDiffer>false</organismsDiffer>
    <experiments>6</experiments>
</comment>
<comment type="interaction">
    <interactant intactId="EBI-750332">
        <id>Q9BU20</id>
    </interactant>
    <interactant intactId="EBI-1111534">
        <id>P61587</id>
        <label>RND3</label>
    </interactant>
    <organismsDiffer>false</organismsDiffer>
    <experiments>3</experiments>
</comment>
<comment type="subcellular location">
    <subcellularLocation>
        <location evidence="5">Cytoplasm</location>
        <location evidence="5">Cytoskeleton</location>
        <location evidence="5">Cilium basal body</location>
    </subcellularLocation>
    <subcellularLocation>
        <location evidence="5">Cytoplasm</location>
        <location evidence="5">Cytoskeleton</location>
        <location evidence="5">Microtubule organizing center</location>
        <location evidence="5">Centrosome</location>
        <location evidence="5">Centriole</location>
    </subcellularLocation>
    <text evidence="1 5">Localizes at the transition zone, a region between the basal body and the ciliary axoneme (PubMed:29038301). Recruitment to the centriole depends on TTBK2, INTU, and its own GTPase activity (By similarity).</text>
</comment>
<comment type="similarity">
    <text evidence="7">Belongs to the small GTPase superfamily. Rab family.</text>
</comment>
<gene>
    <name evidence="8" type="primary">CPLANE2</name>
    <name type="synonym">C1orf89</name>
    <name evidence="2" type="synonym">RSG1</name>
</gene>
<protein>
    <recommendedName>
        <fullName evidence="7">Ciliogenesis and planar polarity effector 2</fullName>
    </recommendedName>
    <alternativeName>
        <fullName evidence="2">REM2- and Rab-like small GTPase 1</fullName>
    </alternativeName>
</protein>
<reference key="1">
    <citation type="journal article" date="2006" name="Nature">
        <title>The DNA sequence and biological annotation of human chromosome 1.</title>
        <authorList>
            <person name="Gregory S.G."/>
            <person name="Barlow K.F."/>
            <person name="McLay K.E."/>
            <person name="Kaul R."/>
            <person name="Swarbreck D."/>
            <person name="Dunham A."/>
            <person name="Scott C.E."/>
            <person name="Howe K.L."/>
            <person name="Woodfine K."/>
            <person name="Spencer C.C.A."/>
            <person name="Jones M.C."/>
            <person name="Gillson C."/>
            <person name="Searle S."/>
            <person name="Zhou Y."/>
            <person name="Kokocinski F."/>
            <person name="McDonald L."/>
            <person name="Evans R."/>
            <person name="Phillips K."/>
            <person name="Atkinson A."/>
            <person name="Cooper R."/>
            <person name="Jones C."/>
            <person name="Hall R.E."/>
            <person name="Andrews T.D."/>
            <person name="Lloyd C."/>
            <person name="Ainscough R."/>
            <person name="Almeida J.P."/>
            <person name="Ambrose K.D."/>
            <person name="Anderson F."/>
            <person name="Andrew R.W."/>
            <person name="Ashwell R.I.S."/>
            <person name="Aubin K."/>
            <person name="Babbage A.K."/>
            <person name="Bagguley C.L."/>
            <person name="Bailey J."/>
            <person name="Beasley H."/>
            <person name="Bethel G."/>
            <person name="Bird C.P."/>
            <person name="Bray-Allen S."/>
            <person name="Brown J.Y."/>
            <person name="Brown A.J."/>
            <person name="Buckley D."/>
            <person name="Burton J."/>
            <person name="Bye J."/>
            <person name="Carder C."/>
            <person name="Chapman J.C."/>
            <person name="Clark S.Y."/>
            <person name="Clarke G."/>
            <person name="Clee C."/>
            <person name="Cobley V."/>
            <person name="Collier R.E."/>
            <person name="Corby N."/>
            <person name="Coville G.J."/>
            <person name="Davies J."/>
            <person name="Deadman R."/>
            <person name="Dunn M."/>
            <person name="Earthrowl M."/>
            <person name="Ellington A.G."/>
            <person name="Errington H."/>
            <person name="Frankish A."/>
            <person name="Frankland J."/>
            <person name="French L."/>
            <person name="Garner P."/>
            <person name="Garnett J."/>
            <person name="Gay L."/>
            <person name="Ghori M.R.J."/>
            <person name="Gibson R."/>
            <person name="Gilby L.M."/>
            <person name="Gillett W."/>
            <person name="Glithero R.J."/>
            <person name="Grafham D.V."/>
            <person name="Griffiths C."/>
            <person name="Griffiths-Jones S."/>
            <person name="Grocock R."/>
            <person name="Hammond S."/>
            <person name="Harrison E.S.I."/>
            <person name="Hart E."/>
            <person name="Haugen E."/>
            <person name="Heath P.D."/>
            <person name="Holmes S."/>
            <person name="Holt K."/>
            <person name="Howden P.J."/>
            <person name="Hunt A.R."/>
            <person name="Hunt S.E."/>
            <person name="Hunter G."/>
            <person name="Isherwood J."/>
            <person name="James R."/>
            <person name="Johnson C."/>
            <person name="Johnson D."/>
            <person name="Joy A."/>
            <person name="Kay M."/>
            <person name="Kershaw J.K."/>
            <person name="Kibukawa M."/>
            <person name="Kimberley A.M."/>
            <person name="King A."/>
            <person name="Knights A.J."/>
            <person name="Lad H."/>
            <person name="Laird G."/>
            <person name="Lawlor S."/>
            <person name="Leongamornlert D.A."/>
            <person name="Lloyd D.M."/>
            <person name="Loveland J."/>
            <person name="Lovell J."/>
            <person name="Lush M.J."/>
            <person name="Lyne R."/>
            <person name="Martin S."/>
            <person name="Mashreghi-Mohammadi M."/>
            <person name="Matthews L."/>
            <person name="Matthews N.S.W."/>
            <person name="McLaren S."/>
            <person name="Milne S."/>
            <person name="Mistry S."/>
            <person name="Moore M.J.F."/>
            <person name="Nickerson T."/>
            <person name="O'Dell C.N."/>
            <person name="Oliver K."/>
            <person name="Palmeiri A."/>
            <person name="Palmer S.A."/>
            <person name="Parker A."/>
            <person name="Patel D."/>
            <person name="Pearce A.V."/>
            <person name="Peck A.I."/>
            <person name="Pelan S."/>
            <person name="Phelps K."/>
            <person name="Phillimore B.J."/>
            <person name="Plumb R."/>
            <person name="Rajan J."/>
            <person name="Raymond C."/>
            <person name="Rouse G."/>
            <person name="Saenphimmachak C."/>
            <person name="Sehra H.K."/>
            <person name="Sheridan E."/>
            <person name="Shownkeen R."/>
            <person name="Sims S."/>
            <person name="Skuce C.D."/>
            <person name="Smith M."/>
            <person name="Steward C."/>
            <person name="Subramanian S."/>
            <person name="Sycamore N."/>
            <person name="Tracey A."/>
            <person name="Tromans A."/>
            <person name="Van Helmond Z."/>
            <person name="Wall M."/>
            <person name="Wallis J.M."/>
            <person name="White S."/>
            <person name="Whitehead S.L."/>
            <person name="Wilkinson J.E."/>
            <person name="Willey D.L."/>
            <person name="Williams H."/>
            <person name="Wilming L."/>
            <person name="Wray P.W."/>
            <person name="Wu Z."/>
            <person name="Coulson A."/>
            <person name="Vaudin M."/>
            <person name="Sulston J.E."/>
            <person name="Durbin R.M."/>
            <person name="Hubbard T."/>
            <person name="Wooster R."/>
            <person name="Dunham I."/>
            <person name="Carter N.P."/>
            <person name="McVean G."/>
            <person name="Ross M.T."/>
            <person name="Harrow J."/>
            <person name="Olson M.V."/>
            <person name="Beck S."/>
            <person name="Rogers J."/>
            <person name="Bentley D.R."/>
        </authorList>
    </citation>
    <scope>NUCLEOTIDE SEQUENCE [LARGE SCALE GENOMIC DNA]</scope>
</reference>
<reference key="2">
    <citation type="journal article" date="2004" name="Genome Res.">
        <title>The status, quality, and expansion of the NIH full-length cDNA project: the Mammalian Gene Collection (MGC).</title>
        <authorList>
            <consortium name="The MGC Project Team"/>
        </authorList>
    </citation>
    <scope>NUCLEOTIDE SEQUENCE [LARGE SCALE MRNA]</scope>
    <scope>VARIANT GLY-86</scope>
    <source>
        <tissue>Skin</tissue>
    </source>
</reference>
<reference key="3">
    <citation type="journal article" date="2018" name="J. Cell Biol.">
        <title>The small GTPase RSG1 controls a final step in primary cilia initiation.</title>
        <authorList>
            <person name="Agbu S.O."/>
            <person name="Liang Y."/>
            <person name="Liu A."/>
            <person name="Anderson K.V."/>
        </authorList>
    </citation>
    <scope>SUBCELLULAR LOCATION</scope>
</reference>
<reference key="4">
    <citation type="journal article" date="2022" name="Sci. Adv.">
        <title>Structure of the ciliogenesis-associated CPLANE complex.</title>
        <authorList>
            <person name="Langousis G."/>
            <person name="Cavadini S."/>
            <person name="Boegholm N."/>
            <person name="Lorentzen E."/>
            <person name="Kempf G."/>
            <person name="Matthias P."/>
        </authorList>
    </citation>
    <scope>INTERACTION WITH FUZ AND CPLANE COMPLEX</scope>
</reference>
<reference key="5">
    <citation type="journal article" date="2017" name="J. Stroke Cerebrovasc. Dis.">
        <title>Exome sequencing identified CCER2 as a novel candidate gene for Moyamoya disease.</title>
        <authorList>
            <person name="Mukawa M."/>
            <person name="Nariai T."/>
            <person name="Onda H."/>
            <person name="Yoneyama T."/>
            <person name="Aihara Y."/>
            <person name="Hirota K."/>
            <person name="Kudo T."/>
            <person name="Sumita K."/>
            <person name="Maehara T."/>
            <person name="Kawamata T."/>
            <person name="Kasuya H."/>
            <person name="Akagawa H."/>
        </authorList>
    </citation>
    <scope>VARIANT LEU-161</scope>
</reference>
<organism>
    <name type="scientific">Homo sapiens</name>
    <name type="common">Human</name>
    <dbReference type="NCBI Taxonomy" id="9606"/>
    <lineage>
        <taxon>Eukaryota</taxon>
        <taxon>Metazoa</taxon>
        <taxon>Chordata</taxon>
        <taxon>Craniata</taxon>
        <taxon>Vertebrata</taxon>
        <taxon>Euteleostomi</taxon>
        <taxon>Mammalia</taxon>
        <taxon>Eutheria</taxon>
        <taxon>Euarchontoglires</taxon>
        <taxon>Primates</taxon>
        <taxon>Haplorrhini</taxon>
        <taxon>Catarrhini</taxon>
        <taxon>Hominidae</taxon>
        <taxon>Homo</taxon>
    </lineage>
</organism>
<proteinExistence type="evidence at protein level"/>
<name>CPLN2_HUMAN</name>
<accession>Q9BU20</accession>
<accession>Q5TEV7</accession>
<keyword id="KW-0966">Cell projection</keyword>
<keyword id="KW-0969">Cilium</keyword>
<keyword id="KW-0970">Cilium biogenesis/degradation</keyword>
<keyword id="KW-0963">Cytoplasm</keyword>
<keyword id="KW-0206">Cytoskeleton</keyword>
<keyword id="KW-0268">Exocytosis</keyword>
<keyword id="KW-0342">GTP-binding</keyword>
<keyword id="KW-0547">Nucleotide-binding</keyword>
<keyword id="KW-0653">Protein transport</keyword>
<keyword id="KW-1267">Proteomics identification</keyword>
<keyword id="KW-1185">Reference proteome</keyword>
<keyword id="KW-0813">Transport</keyword>
<sequence>MARPPVPGSVVVPNWHESAEGKEYLACILRKNRRRVFGLLERPVLLPPVSIDTASYKIFVSGKSGVGKTALVAKLAGLEVPVVHHETTGIQTTVVFWPAKLQASSRVVMFRFEFWDCGESALKKFDHMLLACMENTDAFLFLFSFTDRASFEDLPGQLARIAGEAPGVVRMVIGSKFDQYMHTDVPERDLTAFRQAWELPLLRVKSVPGRRLADGRTLDGRAGLADVAHILNGLAEQLWHQDQVAAGLLPNPPESAPE</sequence>